<accession>Q6X5T3</accession>
<proteinExistence type="evidence at protein level"/>
<evidence type="ECO:0000250" key="1"/>
<evidence type="ECO:0000255" key="2">
    <source>
        <dbReference type="PROSITE-ProRule" id="PRU00040"/>
    </source>
</evidence>
<evidence type="ECO:0000269" key="3">
    <source>
    </source>
</evidence>
<evidence type="ECO:0000305" key="4"/>
<comment type="function">
    <text evidence="1">Interferes with one step of hemostasis (modulation of platelet aggregation, or coagulation cascade, for example).</text>
</comment>
<comment type="subunit">
    <text evidence="1">Heterodimer; disulfide-linked.</text>
</comment>
<comment type="subcellular location">
    <subcellularLocation>
        <location>Secreted</location>
    </subcellularLocation>
</comment>
<comment type="tissue specificity">
    <text>Expressed by the venom gland.</text>
</comment>
<comment type="miscellaneous">
    <text>Shows greater sequence similarity to the alpha than beta subunits compared to other heterodimer snaclecs.</text>
</comment>
<comment type="similarity">
    <text evidence="4">Belongs to the snaclec family.</text>
</comment>
<name>SL5_BITAR</name>
<keyword id="KW-0903">Direct protein sequencing</keyword>
<keyword id="KW-1015">Disulfide bond</keyword>
<keyword id="KW-1199">Hemostasis impairing toxin</keyword>
<keyword id="KW-0964">Secreted</keyword>
<keyword id="KW-0732">Signal</keyword>
<keyword id="KW-0800">Toxin</keyword>
<reference key="1">
    <citation type="journal article" date="2003" name="Gene">
        <title>Novel sequences encoding venom C-type lectins are conserved in phylogenetically and geographically distinct Echis and Bitis viper species.</title>
        <authorList>
            <person name="Harrison R.A."/>
            <person name="Oliver J."/>
            <person name="Hasson S.S."/>
            <person name="Bharati K."/>
            <person name="Theakston R.D.G."/>
        </authorList>
    </citation>
    <scope>NUCLEOTIDE SEQUENCE [MRNA]</scope>
    <source>
        <tissue>Venom gland</tissue>
    </source>
</reference>
<reference key="2">
    <citation type="journal article" date="2006" name="J. Mol. Evol.">
        <title>Molecular cloning of disintegrin-like transcript BA-5A from a Bitis arietans venom gland cDNA library: a putative intermediate in the evolution of the long-chain disintegrin bitistatin.</title>
        <authorList>
            <person name="Juarez P."/>
            <person name="Wagstaff S.C."/>
            <person name="Oliver J."/>
            <person name="Sanz L."/>
            <person name="Harrison R.A."/>
            <person name="Calvete J.J."/>
        </authorList>
    </citation>
    <scope>PROTEIN SEQUENCE OF 24-39</scope>
    <scope>IDENTIFICATION BY MASS SPECTROMETRY</scope>
    <source>
        <tissue>Venom</tissue>
    </source>
</reference>
<dbReference type="EMBL" id="AY254327">
    <property type="protein sequence ID" value="AAQ01208.1"/>
    <property type="molecule type" value="mRNA"/>
</dbReference>
<dbReference type="SMR" id="Q6X5T3"/>
<dbReference type="GO" id="GO:0005576">
    <property type="term" value="C:extracellular region"/>
    <property type="evidence" value="ECO:0007669"/>
    <property type="project" value="UniProtKB-SubCell"/>
</dbReference>
<dbReference type="GO" id="GO:0090729">
    <property type="term" value="F:toxin activity"/>
    <property type="evidence" value="ECO:0007669"/>
    <property type="project" value="UniProtKB-KW"/>
</dbReference>
<dbReference type="FunFam" id="3.10.100.10:FF:000087">
    <property type="entry name" value="Snaclec rhodocetin subunit delta"/>
    <property type="match status" value="1"/>
</dbReference>
<dbReference type="Gene3D" id="3.10.100.10">
    <property type="entry name" value="Mannose-Binding Protein A, subunit A"/>
    <property type="match status" value="1"/>
</dbReference>
<dbReference type="InterPro" id="IPR001304">
    <property type="entry name" value="C-type_lectin-like"/>
</dbReference>
<dbReference type="InterPro" id="IPR016186">
    <property type="entry name" value="C-type_lectin-like/link_sf"/>
</dbReference>
<dbReference type="InterPro" id="IPR050111">
    <property type="entry name" value="C-type_lectin/snaclec_domain"/>
</dbReference>
<dbReference type="InterPro" id="IPR016187">
    <property type="entry name" value="CTDL_fold"/>
</dbReference>
<dbReference type="PANTHER" id="PTHR22803">
    <property type="entry name" value="MANNOSE, PHOSPHOLIPASE, LECTIN RECEPTOR RELATED"/>
    <property type="match status" value="1"/>
</dbReference>
<dbReference type="Pfam" id="PF00059">
    <property type="entry name" value="Lectin_C"/>
    <property type="match status" value="1"/>
</dbReference>
<dbReference type="PRINTS" id="PR01504">
    <property type="entry name" value="PNCREATITSAP"/>
</dbReference>
<dbReference type="SMART" id="SM00034">
    <property type="entry name" value="CLECT"/>
    <property type="match status" value="1"/>
</dbReference>
<dbReference type="SUPFAM" id="SSF56436">
    <property type="entry name" value="C-type lectin-like"/>
    <property type="match status" value="1"/>
</dbReference>
<dbReference type="PROSITE" id="PS50041">
    <property type="entry name" value="C_TYPE_LECTIN_2"/>
    <property type="match status" value="1"/>
</dbReference>
<organism>
    <name type="scientific">Bitis arietans</name>
    <name type="common">African puff adder</name>
    <dbReference type="NCBI Taxonomy" id="8692"/>
    <lineage>
        <taxon>Eukaryota</taxon>
        <taxon>Metazoa</taxon>
        <taxon>Chordata</taxon>
        <taxon>Craniata</taxon>
        <taxon>Vertebrata</taxon>
        <taxon>Euteleostomi</taxon>
        <taxon>Lepidosauria</taxon>
        <taxon>Squamata</taxon>
        <taxon>Bifurcata</taxon>
        <taxon>Unidentata</taxon>
        <taxon>Episquamata</taxon>
        <taxon>Toxicofera</taxon>
        <taxon>Serpentes</taxon>
        <taxon>Colubroidea</taxon>
        <taxon>Viperidae</taxon>
        <taxon>Viperinae</taxon>
        <taxon>Bitis</taxon>
    </lineage>
</organism>
<feature type="signal peptide" evidence="3">
    <location>
        <begin position="1"/>
        <end position="23"/>
    </location>
</feature>
<feature type="chain" id="PRO_0000355245" description="Snaclec 5">
    <location>
        <begin position="24"/>
        <end position="152"/>
    </location>
</feature>
<feature type="domain" description="C-type lectin" evidence="2">
    <location>
        <begin position="34"/>
        <end position="149"/>
    </location>
</feature>
<feature type="disulfide bond" evidence="2">
    <location>
        <begin position="27"/>
        <end position="38"/>
    </location>
</feature>
<feature type="disulfide bond" evidence="2">
    <location>
        <begin position="55"/>
        <end position="148"/>
    </location>
</feature>
<feature type="disulfide bond" description="Interchain" evidence="2">
    <location>
        <position position="100"/>
    </location>
</feature>
<feature type="disulfide bond" evidence="2">
    <location>
        <begin position="123"/>
        <end position="140"/>
    </location>
</feature>
<sequence length="152" mass="17255">MGRFIFLSSGLLVVFLSLSGTGADFQCPSEWSAYGQHCYRAFKYEKSWAEAEKFCMEQANDGHLVSIQSIKEANFVAKLVSGIIAYIWIGLRDRRKEQQCTSEWNDGSKVTYVNWREGESQMCQVLAIWSGFKNWVNTDCASHNPFVCKSPA</sequence>
<protein>
    <recommendedName>
        <fullName>Snaclec 5</fullName>
    </recommendedName>
    <alternativeName>
        <fullName>C-type lectin 5</fullName>
        <shortName>CTL-5</shortName>
    </alternativeName>
</protein>